<accession>Q5SP46</accession>
<comment type="function">
    <text evidence="1">Glycosyltransferase which elongates the O-linked glucose attached to EGF-like repeats in the extracellular domain of Notch proteins by catalyzing the addition of xylose.</text>
</comment>
<comment type="catalytic activity">
    <reaction evidence="1">
        <text>3-O-(beta-D-glucosyl)-L-seryl-[EGF-like domain protein] + UDP-alpha-D-xylose = 3-O-[alpha-D-xylosyl-(1-&gt;3)-beta-D-glucosyl]-L-seryl-[EGF-like domain protein] + UDP + H(+)</text>
        <dbReference type="Rhea" id="RHEA:56064"/>
        <dbReference type="Rhea" id="RHEA-COMP:14610"/>
        <dbReference type="Rhea" id="RHEA-COMP:14611"/>
        <dbReference type="ChEBI" id="CHEBI:15378"/>
        <dbReference type="ChEBI" id="CHEBI:57632"/>
        <dbReference type="ChEBI" id="CHEBI:58223"/>
        <dbReference type="ChEBI" id="CHEBI:140575"/>
        <dbReference type="ChEBI" id="CHEBI:140576"/>
        <dbReference type="EC" id="2.4.2.42"/>
    </reaction>
</comment>
<comment type="subcellular location">
    <subcellularLocation>
        <location evidence="4">Membrane</location>
        <topology evidence="4">Single-pass type II membrane protein</topology>
    </subcellularLocation>
</comment>
<comment type="similarity">
    <text evidence="4">Belongs to the glycosyltransferase 8 family.</text>
</comment>
<keyword id="KW-0325">Glycoprotein</keyword>
<keyword id="KW-0328">Glycosyltransferase</keyword>
<keyword id="KW-0472">Membrane</keyword>
<keyword id="KW-1185">Reference proteome</keyword>
<keyword id="KW-0735">Signal-anchor</keyword>
<keyword id="KW-0808">Transferase</keyword>
<keyword id="KW-0812">Transmembrane</keyword>
<keyword id="KW-1133">Transmembrane helix</keyword>
<protein>
    <recommendedName>
        <fullName>Glucoside xylosyltransferase 1</fullName>
        <ecNumber evidence="1">2.4.2.42</ecNumber>
    </recommendedName>
    <alternativeName>
        <fullName>Glycosyltransferase 8 domain-containing protein 3</fullName>
    </alternativeName>
</protein>
<sequence>MRIYLRTFGLCIVVALLSLVFLFSKHDEGSFSAGFKQVRAPLQQKSFNGAKAKQRPTATTSHRDVVQNPNSPVQEEVLMHLAAVACGERHGEVVNMLKTAVTLSQRALRFHIFAEQQLQTSIKADLDSWPAFIQGKFSYVLHPISFPHEHHEEWSQLFKPCASQRLFLPMILRELDSLLYVDTDVLFLQPVELIWDMLMLFNSTQLIAMAPEHEEPRIAWYSRFSWHPYYGKMGINSGVMLMNLTRMRITQFKNDMTPVGLHWDELLMPLLQKYKLNITWGDQDLINIIFHYNPEMVYTLPCHWNYRPDHCIYGSNCAPAEDEGVFVLHGNRGVFHSDKQPAFRAVYEAFEQYTFGEDLRQSLLSRLEVALNETTHTYCGKASHFFTTGLQKSVRRLQRATPPGD</sequence>
<dbReference type="EC" id="2.4.2.42" evidence="1"/>
<dbReference type="EMBL" id="AL929504">
    <property type="protein sequence ID" value="CAI11646.1"/>
    <property type="molecule type" value="Genomic_DNA"/>
</dbReference>
<dbReference type="RefSeq" id="NP_001025270.1">
    <property type="nucleotide sequence ID" value="NM_001030099.1"/>
</dbReference>
<dbReference type="SMR" id="Q5SP46"/>
<dbReference type="FunCoup" id="Q5SP46">
    <property type="interactions" value="17"/>
</dbReference>
<dbReference type="STRING" id="7955.ENSDARP00000030796"/>
<dbReference type="CAZy" id="GT8">
    <property type="family name" value="Glycosyltransferase Family 8"/>
</dbReference>
<dbReference type="GlyCosmos" id="Q5SP46">
    <property type="glycosylation" value="4 sites, No reported glycans"/>
</dbReference>
<dbReference type="PaxDb" id="7955-ENSDARP00000030796"/>
<dbReference type="Ensembl" id="ENSDART00000032805">
    <property type="protein sequence ID" value="ENSDARP00000030796"/>
    <property type="gene ID" value="ENSDARG00000022550"/>
</dbReference>
<dbReference type="GeneID" id="556315"/>
<dbReference type="KEGG" id="dre:556315"/>
<dbReference type="AGR" id="ZFIN:ZDB-GENE-041210-116"/>
<dbReference type="CTD" id="556315"/>
<dbReference type="ZFIN" id="ZDB-GENE-041210-116">
    <property type="gene designation" value="gxylt1b"/>
</dbReference>
<dbReference type="eggNOG" id="KOG3765">
    <property type="taxonomic scope" value="Eukaryota"/>
</dbReference>
<dbReference type="HOGENOM" id="CLU_040965_0_0_1"/>
<dbReference type="InParanoid" id="Q5SP46"/>
<dbReference type="OMA" id="NRYIMRQ"/>
<dbReference type="OrthoDB" id="6238971at2759"/>
<dbReference type="PhylomeDB" id="Q5SP46"/>
<dbReference type="TreeFam" id="TF323210"/>
<dbReference type="PRO" id="PR:Q5SP46"/>
<dbReference type="Proteomes" id="UP000000437">
    <property type="component" value="Chromosome 4"/>
</dbReference>
<dbReference type="Bgee" id="ENSDARG00000022550">
    <property type="expression patterns" value="Expressed in camera-type eye and 15 other cell types or tissues"/>
</dbReference>
<dbReference type="ExpressionAtlas" id="Q5SP46">
    <property type="expression patterns" value="baseline"/>
</dbReference>
<dbReference type="GO" id="GO:0016020">
    <property type="term" value="C:membrane"/>
    <property type="evidence" value="ECO:0007669"/>
    <property type="project" value="UniProtKB-SubCell"/>
</dbReference>
<dbReference type="GO" id="GO:0140563">
    <property type="term" value="F:UDP-D-xylose:beta-D-glucoside alpha-1,3-D-xylosyltransferase activity"/>
    <property type="evidence" value="ECO:0007669"/>
    <property type="project" value="UniProtKB-EC"/>
</dbReference>
<dbReference type="GO" id="GO:0035252">
    <property type="term" value="F:UDP-xylosyltransferase activity"/>
    <property type="evidence" value="ECO:0000250"/>
    <property type="project" value="UniProtKB"/>
</dbReference>
<dbReference type="GO" id="GO:0016266">
    <property type="term" value="P:O-glycan processing"/>
    <property type="evidence" value="ECO:0000250"/>
    <property type="project" value="UniProtKB"/>
</dbReference>
<dbReference type="CDD" id="cd06430">
    <property type="entry name" value="GT8_like_2"/>
    <property type="match status" value="1"/>
</dbReference>
<dbReference type="FunFam" id="3.90.550.10:FF:000042">
    <property type="entry name" value="Glucoside xylosyltransferase 1"/>
    <property type="match status" value="1"/>
</dbReference>
<dbReference type="Gene3D" id="3.90.550.10">
    <property type="entry name" value="Spore Coat Polysaccharide Biosynthesis Protein SpsA, Chain A"/>
    <property type="match status" value="1"/>
</dbReference>
<dbReference type="InterPro" id="IPR002495">
    <property type="entry name" value="Glyco_trans_8"/>
</dbReference>
<dbReference type="InterPro" id="IPR051993">
    <property type="entry name" value="Glycosyltransferase_8"/>
</dbReference>
<dbReference type="InterPro" id="IPR029044">
    <property type="entry name" value="Nucleotide-diphossugar_trans"/>
</dbReference>
<dbReference type="PANTHER" id="PTHR46012:SF3">
    <property type="entry name" value="GLUCOSIDE XYLOSYLTRANSFERASE 1"/>
    <property type="match status" value="1"/>
</dbReference>
<dbReference type="PANTHER" id="PTHR46012">
    <property type="entry name" value="IP22168P"/>
    <property type="match status" value="1"/>
</dbReference>
<dbReference type="Pfam" id="PF01501">
    <property type="entry name" value="Glyco_transf_8"/>
    <property type="match status" value="1"/>
</dbReference>
<dbReference type="SUPFAM" id="SSF53448">
    <property type="entry name" value="Nucleotide-diphospho-sugar transferases"/>
    <property type="match status" value="1"/>
</dbReference>
<organism>
    <name type="scientific">Danio rerio</name>
    <name type="common">Zebrafish</name>
    <name type="synonym">Brachydanio rerio</name>
    <dbReference type="NCBI Taxonomy" id="7955"/>
    <lineage>
        <taxon>Eukaryota</taxon>
        <taxon>Metazoa</taxon>
        <taxon>Chordata</taxon>
        <taxon>Craniata</taxon>
        <taxon>Vertebrata</taxon>
        <taxon>Euteleostomi</taxon>
        <taxon>Actinopterygii</taxon>
        <taxon>Neopterygii</taxon>
        <taxon>Teleostei</taxon>
        <taxon>Ostariophysi</taxon>
        <taxon>Cypriniformes</taxon>
        <taxon>Danionidae</taxon>
        <taxon>Danioninae</taxon>
        <taxon>Danio</taxon>
    </lineage>
</organism>
<gene>
    <name type="primary">gxylt1</name>
    <name type="synonym">glt8d3</name>
    <name type="ORF">si:ch211-155a11.6</name>
</gene>
<reference key="1">
    <citation type="journal article" date="2013" name="Nature">
        <title>The zebrafish reference genome sequence and its relationship to the human genome.</title>
        <authorList>
            <person name="Howe K."/>
            <person name="Clark M.D."/>
            <person name="Torroja C.F."/>
            <person name="Torrance J."/>
            <person name="Berthelot C."/>
            <person name="Muffato M."/>
            <person name="Collins J.E."/>
            <person name="Humphray S."/>
            <person name="McLaren K."/>
            <person name="Matthews L."/>
            <person name="McLaren S."/>
            <person name="Sealy I."/>
            <person name="Caccamo M."/>
            <person name="Churcher C."/>
            <person name="Scott C."/>
            <person name="Barrett J.C."/>
            <person name="Koch R."/>
            <person name="Rauch G.J."/>
            <person name="White S."/>
            <person name="Chow W."/>
            <person name="Kilian B."/>
            <person name="Quintais L.T."/>
            <person name="Guerra-Assuncao J.A."/>
            <person name="Zhou Y."/>
            <person name="Gu Y."/>
            <person name="Yen J."/>
            <person name="Vogel J.H."/>
            <person name="Eyre T."/>
            <person name="Redmond S."/>
            <person name="Banerjee R."/>
            <person name="Chi J."/>
            <person name="Fu B."/>
            <person name="Langley E."/>
            <person name="Maguire S.F."/>
            <person name="Laird G.K."/>
            <person name="Lloyd D."/>
            <person name="Kenyon E."/>
            <person name="Donaldson S."/>
            <person name="Sehra H."/>
            <person name="Almeida-King J."/>
            <person name="Loveland J."/>
            <person name="Trevanion S."/>
            <person name="Jones M."/>
            <person name="Quail M."/>
            <person name="Willey D."/>
            <person name="Hunt A."/>
            <person name="Burton J."/>
            <person name="Sims S."/>
            <person name="McLay K."/>
            <person name="Plumb B."/>
            <person name="Davis J."/>
            <person name="Clee C."/>
            <person name="Oliver K."/>
            <person name="Clark R."/>
            <person name="Riddle C."/>
            <person name="Elliot D."/>
            <person name="Threadgold G."/>
            <person name="Harden G."/>
            <person name="Ware D."/>
            <person name="Begum S."/>
            <person name="Mortimore B."/>
            <person name="Kerry G."/>
            <person name="Heath P."/>
            <person name="Phillimore B."/>
            <person name="Tracey A."/>
            <person name="Corby N."/>
            <person name="Dunn M."/>
            <person name="Johnson C."/>
            <person name="Wood J."/>
            <person name="Clark S."/>
            <person name="Pelan S."/>
            <person name="Griffiths G."/>
            <person name="Smith M."/>
            <person name="Glithero R."/>
            <person name="Howden P."/>
            <person name="Barker N."/>
            <person name="Lloyd C."/>
            <person name="Stevens C."/>
            <person name="Harley J."/>
            <person name="Holt K."/>
            <person name="Panagiotidis G."/>
            <person name="Lovell J."/>
            <person name="Beasley H."/>
            <person name="Henderson C."/>
            <person name="Gordon D."/>
            <person name="Auger K."/>
            <person name="Wright D."/>
            <person name="Collins J."/>
            <person name="Raisen C."/>
            <person name="Dyer L."/>
            <person name="Leung K."/>
            <person name="Robertson L."/>
            <person name="Ambridge K."/>
            <person name="Leongamornlert D."/>
            <person name="McGuire S."/>
            <person name="Gilderthorp R."/>
            <person name="Griffiths C."/>
            <person name="Manthravadi D."/>
            <person name="Nichol S."/>
            <person name="Barker G."/>
            <person name="Whitehead S."/>
            <person name="Kay M."/>
            <person name="Brown J."/>
            <person name="Murnane C."/>
            <person name="Gray E."/>
            <person name="Humphries M."/>
            <person name="Sycamore N."/>
            <person name="Barker D."/>
            <person name="Saunders D."/>
            <person name="Wallis J."/>
            <person name="Babbage A."/>
            <person name="Hammond S."/>
            <person name="Mashreghi-Mohammadi M."/>
            <person name="Barr L."/>
            <person name="Martin S."/>
            <person name="Wray P."/>
            <person name="Ellington A."/>
            <person name="Matthews N."/>
            <person name="Ellwood M."/>
            <person name="Woodmansey R."/>
            <person name="Clark G."/>
            <person name="Cooper J."/>
            <person name="Tromans A."/>
            <person name="Grafham D."/>
            <person name="Skuce C."/>
            <person name="Pandian R."/>
            <person name="Andrews R."/>
            <person name="Harrison E."/>
            <person name="Kimberley A."/>
            <person name="Garnett J."/>
            <person name="Fosker N."/>
            <person name="Hall R."/>
            <person name="Garner P."/>
            <person name="Kelly D."/>
            <person name="Bird C."/>
            <person name="Palmer S."/>
            <person name="Gehring I."/>
            <person name="Berger A."/>
            <person name="Dooley C.M."/>
            <person name="Ersan-Urun Z."/>
            <person name="Eser C."/>
            <person name="Geiger H."/>
            <person name="Geisler M."/>
            <person name="Karotki L."/>
            <person name="Kirn A."/>
            <person name="Konantz J."/>
            <person name="Konantz M."/>
            <person name="Oberlander M."/>
            <person name="Rudolph-Geiger S."/>
            <person name="Teucke M."/>
            <person name="Lanz C."/>
            <person name="Raddatz G."/>
            <person name="Osoegawa K."/>
            <person name="Zhu B."/>
            <person name="Rapp A."/>
            <person name="Widaa S."/>
            <person name="Langford C."/>
            <person name="Yang F."/>
            <person name="Schuster S.C."/>
            <person name="Carter N.P."/>
            <person name="Harrow J."/>
            <person name="Ning Z."/>
            <person name="Herrero J."/>
            <person name="Searle S.M."/>
            <person name="Enright A."/>
            <person name="Geisler R."/>
            <person name="Plasterk R.H."/>
            <person name="Lee C."/>
            <person name="Westerfield M."/>
            <person name="de Jong P.J."/>
            <person name="Zon L.I."/>
            <person name="Postlethwait J.H."/>
            <person name="Nusslein-Volhard C."/>
            <person name="Hubbard T.J."/>
            <person name="Roest Crollius H."/>
            <person name="Rogers J."/>
            <person name="Stemple D.L."/>
        </authorList>
    </citation>
    <scope>NUCLEOTIDE SEQUENCE [LARGE SCALE GENOMIC DNA]</scope>
    <source>
        <strain>Tuebingen</strain>
    </source>
</reference>
<evidence type="ECO:0000250" key="1">
    <source>
        <dbReference type="UniProtKB" id="Q4G148"/>
    </source>
</evidence>
<evidence type="ECO:0000255" key="2"/>
<evidence type="ECO:0000256" key="3">
    <source>
        <dbReference type="SAM" id="MobiDB-lite"/>
    </source>
</evidence>
<evidence type="ECO:0000305" key="4"/>
<name>GXLT1_DANRE</name>
<feature type="chain" id="PRO_0000288538" description="Glucoside xylosyltransferase 1">
    <location>
        <begin position="1"/>
        <end position="405"/>
    </location>
</feature>
<feature type="topological domain" description="Cytoplasmic" evidence="2">
    <location>
        <begin position="1"/>
        <end position="2"/>
    </location>
</feature>
<feature type="transmembrane region" description="Helical; Signal-anchor for type II membrane protein" evidence="2">
    <location>
        <begin position="3"/>
        <end position="23"/>
    </location>
</feature>
<feature type="topological domain" description="Lumenal" evidence="2">
    <location>
        <begin position="24"/>
        <end position="405"/>
    </location>
</feature>
<feature type="region of interest" description="Disordered" evidence="3">
    <location>
        <begin position="46"/>
        <end position="65"/>
    </location>
</feature>
<feature type="glycosylation site" description="N-linked (GlcNAc...) asparagine" evidence="2">
    <location>
        <position position="202"/>
    </location>
</feature>
<feature type="glycosylation site" description="N-linked (GlcNAc...) asparagine" evidence="2">
    <location>
        <position position="243"/>
    </location>
</feature>
<feature type="glycosylation site" description="N-linked (GlcNAc...) asparagine" evidence="2">
    <location>
        <position position="277"/>
    </location>
</feature>
<feature type="glycosylation site" description="N-linked (GlcNAc...) asparagine" evidence="2">
    <location>
        <position position="372"/>
    </location>
</feature>
<proteinExistence type="inferred from homology"/>